<comment type="function">
    <text evidence="1 2 8">Catalyzes one of the two ATP producing reactions in the glycolytic pathway via the reversible conversion of 1,3-diphosphoglycerate to 3-phosphoglycerate (PubMed:6254992). Both L- and D- forms of purine and pyrimidine nucleotides can be used as substrates, but the activity is much lower on pyrimidines (By similarity). Negatively regulates the biosynthesis of acetyl-CoA from pyruvate in the mitochondrion (By similarity).</text>
</comment>
<comment type="catalytic activity">
    <reaction evidence="12">
        <text>(2R)-3-phosphoglycerate + ATP = (2R)-3-phospho-glyceroyl phosphate + ADP</text>
        <dbReference type="Rhea" id="RHEA:14801"/>
        <dbReference type="ChEBI" id="CHEBI:30616"/>
        <dbReference type="ChEBI" id="CHEBI:57604"/>
        <dbReference type="ChEBI" id="CHEBI:58272"/>
        <dbReference type="ChEBI" id="CHEBI:456216"/>
        <dbReference type="EC" id="2.7.2.3"/>
    </reaction>
</comment>
<comment type="cofactor">
    <cofactor evidence="2">
        <name>Mg(2+)</name>
        <dbReference type="ChEBI" id="CHEBI:18420"/>
    </cofactor>
</comment>
<comment type="pathway">
    <text evidence="12">Carbohydrate degradation; glycolysis; pyruvate from D-glyceraldehyde 3-phosphate: step 2/5.</text>
</comment>
<comment type="subunit">
    <text evidence="9 10">Monomer.</text>
</comment>
<comment type="subcellular location">
    <subcellularLocation>
        <location evidence="4">Cytoplasm</location>
    </subcellularLocation>
    <subcellularLocation>
        <location evidence="7">Mitochondrion</location>
    </subcellularLocation>
</comment>
<comment type="miscellaneous">
    <text evidence="5">Present with 314000 molecules/cell in log phase SD medium.</text>
</comment>
<comment type="similarity">
    <text evidence="11">Belongs to the phosphoglycerate kinase family.</text>
</comment>
<organism>
    <name type="scientific">Saccharomyces cerevisiae (strain ATCC 204508 / S288c)</name>
    <name type="common">Baker's yeast</name>
    <dbReference type="NCBI Taxonomy" id="559292"/>
    <lineage>
        <taxon>Eukaryota</taxon>
        <taxon>Fungi</taxon>
        <taxon>Dikarya</taxon>
        <taxon>Ascomycota</taxon>
        <taxon>Saccharomycotina</taxon>
        <taxon>Saccharomycetes</taxon>
        <taxon>Saccharomycetales</taxon>
        <taxon>Saccharomycetaceae</taxon>
        <taxon>Saccharomyces</taxon>
    </lineage>
</organism>
<protein>
    <recommendedName>
        <fullName>Phosphoglycerate kinase</fullName>
        <ecNumber evidence="12">2.7.2.3</ecNumber>
    </recommendedName>
</protein>
<evidence type="ECO:0000250" key="1">
    <source>
        <dbReference type="UniProtKB" id="A0A7G5KET3"/>
    </source>
</evidence>
<evidence type="ECO:0000250" key="2">
    <source>
        <dbReference type="UniProtKB" id="P00558"/>
    </source>
</evidence>
<evidence type="ECO:0000250" key="3">
    <source>
        <dbReference type="UniProtKB" id="Q7SIB7"/>
    </source>
</evidence>
<evidence type="ECO:0000269" key="4">
    <source>
    </source>
</evidence>
<evidence type="ECO:0000269" key="5">
    <source>
    </source>
</evidence>
<evidence type="ECO:0000269" key="6">
    <source>
    </source>
</evidence>
<evidence type="ECO:0000269" key="7">
    <source>
    </source>
</evidence>
<evidence type="ECO:0000269" key="8">
    <source>
    </source>
</evidence>
<evidence type="ECO:0000269" key="9">
    <source>
    </source>
</evidence>
<evidence type="ECO:0000269" key="10">
    <source>
    </source>
</evidence>
<evidence type="ECO:0000305" key="11"/>
<evidence type="ECO:0000305" key="12">
    <source>
    </source>
</evidence>
<evidence type="ECO:0007744" key="13">
    <source>
        <dbReference type="PDB" id="1QPG"/>
    </source>
</evidence>
<evidence type="ECO:0007744" key="14">
    <source>
        <dbReference type="PDB" id="3PGK"/>
    </source>
</evidence>
<evidence type="ECO:0007744" key="15">
    <source>
    </source>
</evidence>
<evidence type="ECO:0007744" key="16">
    <source>
    </source>
</evidence>
<evidence type="ECO:0007744" key="17">
    <source>
    </source>
</evidence>
<evidence type="ECO:0007744" key="18">
    <source>
    </source>
</evidence>
<evidence type="ECO:0007744" key="19">
    <source>
    </source>
</evidence>
<evidence type="ECO:0007744" key="20">
    <source>
    </source>
</evidence>
<evidence type="ECO:0007744" key="21">
    <source>
    </source>
</evidence>
<evidence type="ECO:0007829" key="22">
    <source>
        <dbReference type="PDB" id="1FW8"/>
    </source>
</evidence>
<evidence type="ECO:0007829" key="23">
    <source>
        <dbReference type="PDB" id="1QPG"/>
    </source>
</evidence>
<evidence type="ECO:0007829" key="24">
    <source>
        <dbReference type="PDB" id="3PGK"/>
    </source>
</evidence>
<reference key="1">
    <citation type="journal article" date="1982" name="Nucleic Acids Res.">
        <title>The primary structure of the Saccharomyces cerevisiae gene for 3-phosphoglycerate kinase.</title>
        <authorList>
            <person name="Hitzeman R.A."/>
            <person name="Hagie F.E."/>
            <person name="Hayflick J.S."/>
            <person name="Chen C.Y."/>
            <person name="Seeburg P.H."/>
            <person name="Derynck R."/>
        </authorList>
    </citation>
    <scope>NUCLEOTIDE SEQUENCE [GENOMIC DNA]</scope>
</reference>
<reference key="2">
    <citation type="journal article" date="1992" name="Yeast">
        <title>The complete sequence of a 10.8 kb segment distal of SUF2 on the right arm of chromosome III from Saccharomyces cerevisiae reveals seven open reading frames including the RVS161, ADP1 and PGK genes.</title>
        <authorList>
            <person name="Skala J."/>
            <person name="Purnelle B."/>
            <person name="Goffeau A."/>
        </authorList>
    </citation>
    <scope>NUCLEOTIDE SEQUENCE [GENOMIC DNA]</scope>
</reference>
<reference key="3">
    <citation type="journal article" date="1992" name="Nature">
        <title>The complete DNA sequence of yeast chromosome III.</title>
        <authorList>
            <person name="Oliver S.G."/>
            <person name="van der Aart Q.J.M."/>
            <person name="Agostoni-Carbone M.L."/>
            <person name="Aigle M."/>
            <person name="Alberghina L."/>
            <person name="Alexandraki D."/>
            <person name="Antoine G."/>
            <person name="Anwar R."/>
            <person name="Ballesta J.P.G."/>
            <person name="Benit P."/>
            <person name="Berben G."/>
            <person name="Bergantino E."/>
            <person name="Biteau N."/>
            <person name="Bolle P.-A."/>
            <person name="Bolotin-Fukuhara M."/>
            <person name="Brown A."/>
            <person name="Brown A.J.P."/>
            <person name="Buhler J.-M."/>
            <person name="Carcano C."/>
            <person name="Carignani G."/>
            <person name="Cederberg H."/>
            <person name="Chanet R."/>
            <person name="Contreras R."/>
            <person name="Crouzet M."/>
            <person name="Daignan-Fornier B."/>
            <person name="Defoor E."/>
            <person name="Delgado M.D."/>
            <person name="Demolder J."/>
            <person name="Doira C."/>
            <person name="Dubois E."/>
            <person name="Dujon B."/>
            <person name="Duesterhoeft A."/>
            <person name="Erdmann D."/>
            <person name="Esteban M."/>
            <person name="Fabre F."/>
            <person name="Fairhead C."/>
            <person name="Faye G."/>
            <person name="Feldmann H."/>
            <person name="Fiers W."/>
            <person name="Francingues-Gaillard M.-C."/>
            <person name="Franco L."/>
            <person name="Frontali L."/>
            <person name="Fukuhara H."/>
            <person name="Fuller L.J."/>
            <person name="Galland P."/>
            <person name="Gent M.E."/>
            <person name="Gigot D."/>
            <person name="Gilliquet V."/>
            <person name="Glansdorff N."/>
            <person name="Goffeau A."/>
            <person name="Grenson M."/>
            <person name="Grisanti P."/>
            <person name="Grivell L.A."/>
            <person name="de Haan M."/>
            <person name="Haasemann M."/>
            <person name="Hatat D."/>
            <person name="Hoenicka J."/>
            <person name="Hegemann J.H."/>
            <person name="Herbert C.J."/>
            <person name="Hilger F."/>
            <person name="Hohmann S."/>
            <person name="Hollenberg C.P."/>
            <person name="Huse K."/>
            <person name="Iborra F."/>
            <person name="Indge K.J."/>
            <person name="Isono K."/>
            <person name="Jacq C."/>
            <person name="Jacquet M."/>
            <person name="James C.M."/>
            <person name="Jauniaux J.-C."/>
            <person name="Jia Y."/>
            <person name="Jimenez A."/>
            <person name="Kelly A."/>
            <person name="Kleinhans U."/>
            <person name="Kreisl P."/>
            <person name="Lanfranchi G."/>
            <person name="Lewis C."/>
            <person name="van der Linden C.G."/>
            <person name="Lucchini G."/>
            <person name="Lutzenkirchen K."/>
            <person name="Maat M.J."/>
            <person name="Mallet L."/>
            <person name="Mannhaupt G."/>
            <person name="Martegani E."/>
            <person name="Mathieu A."/>
            <person name="Maurer C.T.C."/>
            <person name="McConnell D."/>
            <person name="McKee R.A."/>
            <person name="Messenguy F."/>
            <person name="Mewes H.-W."/>
            <person name="Molemans F."/>
            <person name="Montague M.A."/>
            <person name="Muzi Falconi M."/>
            <person name="Navas L."/>
            <person name="Newlon C.S."/>
            <person name="Noone D."/>
            <person name="Pallier C."/>
            <person name="Panzeri L."/>
            <person name="Pearson B.M."/>
            <person name="Perea J."/>
            <person name="Philippsen P."/>
            <person name="Pierard A."/>
            <person name="Planta R.J."/>
            <person name="Plevani P."/>
            <person name="Poetsch B."/>
            <person name="Pohl F.M."/>
            <person name="Purnelle B."/>
            <person name="Ramezani Rad M."/>
            <person name="Rasmussen S.W."/>
            <person name="Raynal A."/>
            <person name="Remacha M.A."/>
            <person name="Richterich P."/>
            <person name="Roberts A.B."/>
            <person name="Rodriguez F."/>
            <person name="Sanz E."/>
            <person name="Schaaff-Gerstenschlaeger I."/>
            <person name="Scherens B."/>
            <person name="Schweitzer B."/>
            <person name="Shu Y."/>
            <person name="Skala J."/>
            <person name="Slonimski P.P."/>
            <person name="Sor F."/>
            <person name="Soustelle C."/>
            <person name="Spiegelberg R."/>
            <person name="Stateva L.I."/>
            <person name="Steensma H.Y."/>
            <person name="Steiner S."/>
            <person name="Thierry A."/>
            <person name="Thireos G."/>
            <person name="Tzermia M."/>
            <person name="Urrestarazu L.A."/>
            <person name="Valle G."/>
            <person name="Vetter I."/>
            <person name="van Vliet-Reedijk J.C."/>
            <person name="Voet M."/>
            <person name="Volckaert G."/>
            <person name="Vreken P."/>
            <person name="Wang H."/>
            <person name="Warmington J.R."/>
            <person name="von Wettstein D."/>
            <person name="Wicksteed B.L."/>
            <person name="Wilson C."/>
            <person name="Wurst H."/>
            <person name="Xu G."/>
            <person name="Yoshikawa A."/>
            <person name="Zimmermann F.K."/>
            <person name="Sgouros J.G."/>
        </authorList>
    </citation>
    <scope>NUCLEOTIDE SEQUENCE [LARGE SCALE GENOMIC DNA]</scope>
    <source>
        <strain>ATCC 204508 / S288c</strain>
    </source>
</reference>
<reference key="4">
    <citation type="journal article" date="2014" name="G3 (Bethesda)">
        <title>The reference genome sequence of Saccharomyces cerevisiae: Then and now.</title>
        <authorList>
            <person name="Engel S.R."/>
            <person name="Dietrich F.S."/>
            <person name="Fisk D.G."/>
            <person name="Binkley G."/>
            <person name="Balakrishnan R."/>
            <person name="Costanzo M.C."/>
            <person name="Dwight S.S."/>
            <person name="Hitz B.C."/>
            <person name="Karra K."/>
            <person name="Nash R.S."/>
            <person name="Weng S."/>
            <person name="Wong E.D."/>
            <person name="Lloyd P."/>
            <person name="Skrzypek M.S."/>
            <person name="Miyasato S.R."/>
            <person name="Simison M."/>
            <person name="Cherry J.M."/>
        </authorList>
    </citation>
    <scope>GENOME REANNOTATION</scope>
    <source>
        <strain>ATCC 204508 / S288c</strain>
    </source>
</reference>
<reference key="5">
    <citation type="journal article" date="1982" name="Nucleic Acids Res.">
        <title>Conservation of high efficiency promoter sequences in Saccharomyces cerevisiae.</title>
        <authorList>
            <person name="Dobson M.J."/>
            <person name="Tuite M.F."/>
            <person name="Roberts N.A."/>
            <person name="Kingsman A.J."/>
            <person name="Kingsman S.M."/>
            <person name="Perkins R.E."/>
            <person name="Conroy S.C."/>
            <person name="Dunbar B."/>
            <person name="Fothergill L.A."/>
        </authorList>
    </citation>
    <scope>NUCLEOTIDE SEQUENCE [GENOMIC DNA] OF 1-7</scope>
    <scope>PROTEIN SEQUENCE OF 268-398</scope>
</reference>
<reference key="6">
    <citation type="journal article" date="1983" name="Biochem. J.">
        <title>The complete amino acid sequence of yeast phosphoglycerate kinase.</title>
        <authorList>
            <person name="Perkins R.E."/>
            <person name="Conroy S.C."/>
            <person name="Dunbar B."/>
            <person name="Fothergill L.A."/>
            <person name="Tuite M.F."/>
            <person name="Dobson M.J."/>
            <person name="Kingsman S.M."/>
            <person name="Kingsman A.J."/>
        </authorList>
    </citation>
    <scope>NUCLEOTIDE SEQUENCE [GENOMIC DNA] OF 1-208 AND 282-416</scope>
</reference>
<reference key="7">
    <citation type="journal article" date="1981" name="Int. J. Pept. Protein Res.">
        <title>Structural studies on yeast 3-phosphoglycerate kinase. Linear arrangement of the CNBr fragments, partial amino acid sequence of the inner part of the polypeptide chain, and analyses of the N-terminal domain of the protein.</title>
        <authorList>
            <person name="Fattoum A."/>
            <person name="Roustan C."/>
            <person name="Karoui D."/>
            <person name="Feinberg J."/>
            <person name="Pradel L.-A."/>
            <person name="Gregoire J."/>
            <person name="Rochat H."/>
        </authorList>
    </citation>
    <scope>PROTEIN SEQUENCE OF 173-202 AND 238-270</scope>
</reference>
<reference key="8">
    <citation type="journal article" date="1997" name="Yeast">
        <title>Two-dimensional electrophoretic separation of yeast proteins using a non-linear wide range (pH 3-10) immobilized pH gradient in the first dimension; reproducibility and evidence for isoelectric focusing of alkaline (pI &gt; 7) proteins.</title>
        <authorList>
            <person name="Norbeck J."/>
            <person name="Blomberg A."/>
        </authorList>
    </citation>
    <scope>PROTEIN SEQUENCE OF 150-161; 198-209 AND 245-256</scope>
    <source>
        <strain>ATCC 44827 / SKQ2N</strain>
    </source>
</reference>
<reference key="9">
    <citation type="journal article" date="1980" name="J. Biol. Chem.">
        <title>Isolation and characterization of the yeast 3-phosphoglycerokinase gene (PGK) by an immunological screening technique.</title>
        <authorList>
            <person name="Hitzeman R.A."/>
            <person name="Clarke L."/>
            <person name="Carbon J."/>
        </authorList>
    </citation>
    <scope>FUNCTION</scope>
    <scope>CATALYTIC ACTIVITY</scope>
    <scope>PATHWAY</scope>
</reference>
<reference key="10">
    <citation type="journal article" date="1992" name="Eur. J. Biochem.">
        <title>Characterisation of yeast phosphoglycerate kinase modified by mutagenesis at residue 21.</title>
        <authorList>
            <person name="Walker P.A."/>
            <person name="Joao H.C."/>
            <person name="Littlechild J.A."/>
            <person name="Wiliams R.J.P."/>
            <person name="Watson H.C."/>
        </authorList>
    </citation>
    <scope>MUTAGENESIS OF ARG-22</scope>
</reference>
<reference key="11">
    <citation type="journal article" date="2001" name="Biochemistry">
        <title>Yeast mitochondrial dehydrogenases are associated in a supramolecular complex.</title>
        <authorList>
            <person name="Grandier-Vazeille X."/>
            <person name="Bathany K."/>
            <person name="Chaignepain S."/>
            <person name="Camougrand N."/>
            <person name="Manon S."/>
            <person name="Schmitter J.-M."/>
        </authorList>
    </citation>
    <scope>SUBCELLULAR LOCATION</scope>
</reference>
<reference key="12">
    <citation type="journal article" date="2003" name="Nature">
        <title>Global analysis of protein expression in yeast.</title>
        <authorList>
            <person name="Ghaemmaghami S."/>
            <person name="Huh W.-K."/>
            <person name="Bower K."/>
            <person name="Howson R.W."/>
            <person name="Belle A."/>
            <person name="Dephoure N."/>
            <person name="O'Shea E.K."/>
            <person name="Weissman J.S."/>
        </authorList>
    </citation>
    <scope>LEVEL OF PROTEIN EXPRESSION [LARGE SCALE ANALYSIS]</scope>
</reference>
<reference key="13">
    <citation type="journal article" date="2005" name="Mol. Cell. Proteomics">
        <title>Quantitative phosphoproteomics applied to the yeast pheromone signaling pathway.</title>
        <authorList>
            <person name="Gruhler A."/>
            <person name="Olsen J.V."/>
            <person name="Mohammed S."/>
            <person name="Mortensen P."/>
            <person name="Faergeman N.J."/>
            <person name="Mann M."/>
            <person name="Jensen O.N."/>
        </authorList>
    </citation>
    <scope>ACETYLATION [LARGE SCALE ANALYSIS] AT SER-2</scope>
    <scope>CLEAVAGE OF INITIATOR METHIONINE [LARGE SCALE ANALYSIS]</scope>
    <scope>IDENTIFICATION BY MASS SPECTROMETRY [LARGE SCALE ANALYSIS]</scope>
    <source>
        <strain>YAL6B</strain>
    </source>
</reference>
<reference key="14">
    <citation type="journal article" date="2006" name="J. Proteome Res.">
        <title>Toward the complete yeast mitochondrial proteome: multidimensional separation techniques for mitochondrial proteomics.</title>
        <authorList>
            <person name="Reinders J."/>
            <person name="Zahedi R.P."/>
            <person name="Pfanner N."/>
            <person name="Meisinger C."/>
            <person name="Sickmann A."/>
        </authorList>
    </citation>
    <scope>SUBCELLULAR LOCATION [LARGE SCALE ANALYSIS]</scope>
    <scope>IDENTIFICATION BY MASS SPECTROMETRY</scope>
</reference>
<reference key="15">
    <citation type="journal article" date="2007" name="J. Proteome Res.">
        <title>Large-scale phosphorylation analysis of alpha-factor-arrested Saccharomyces cerevisiae.</title>
        <authorList>
            <person name="Li X."/>
            <person name="Gerber S.A."/>
            <person name="Rudner A.D."/>
            <person name="Beausoleil S.A."/>
            <person name="Haas W."/>
            <person name="Villen J."/>
            <person name="Elias J.E."/>
            <person name="Gygi S.P."/>
        </authorList>
    </citation>
    <scope>PHOSPHORYLATION [LARGE SCALE ANALYSIS] AT SER-154; THR-331 AND THR-392</scope>
    <scope>IDENTIFICATION BY MASS SPECTROMETRY [LARGE SCALE ANALYSIS]</scope>
    <source>
        <strain>ADR376</strain>
    </source>
</reference>
<reference key="16">
    <citation type="journal article" date="2007" name="Proc. Natl. Acad. Sci. U.S.A.">
        <title>Analysis of phosphorylation sites on proteins from Saccharomyces cerevisiae by electron transfer dissociation (ETD) mass spectrometry.</title>
        <authorList>
            <person name="Chi A."/>
            <person name="Huttenhower C."/>
            <person name="Geer L.Y."/>
            <person name="Coon J.J."/>
            <person name="Syka J.E.P."/>
            <person name="Bai D.L."/>
            <person name="Shabanowitz J."/>
            <person name="Burke D.J."/>
            <person name="Troyanskaya O.G."/>
            <person name="Hunt D.F."/>
        </authorList>
    </citation>
    <scope>PHOSPHORYLATION [LARGE SCALE ANALYSIS] AT SER-130</scope>
    <scope>IDENTIFICATION BY MASS SPECTROMETRY [LARGE SCALE ANALYSIS]</scope>
</reference>
<reference key="17">
    <citation type="journal article" date="2008" name="Mol. Cell. Proteomics">
        <title>A multidimensional chromatography technology for in-depth phosphoproteome analysis.</title>
        <authorList>
            <person name="Albuquerque C.P."/>
            <person name="Smolka M.B."/>
            <person name="Payne S.H."/>
            <person name="Bafna V."/>
            <person name="Eng J."/>
            <person name="Zhou H."/>
        </authorList>
    </citation>
    <scope>PHOSPHORYLATION [LARGE SCALE ANALYSIS] AT THR-93; THR-203; THR-241 AND THR-331</scope>
    <scope>IDENTIFICATION BY MASS SPECTROMETRY [LARGE SCALE ANALYSIS]</scope>
</reference>
<reference key="18">
    <citation type="journal article" date="2009" name="Science">
        <title>Global analysis of Cdk1 substrate phosphorylation sites provides insights into evolution.</title>
        <authorList>
            <person name="Holt L.J."/>
            <person name="Tuch B.B."/>
            <person name="Villen J."/>
            <person name="Johnson A.D."/>
            <person name="Gygi S.P."/>
            <person name="Morgan D.O."/>
        </authorList>
    </citation>
    <scope>PHOSPHORYLATION [LARGE SCALE ANALYSIS] AT SER-110; SER-172; THR-298; SER-318; THR-331 AND THR-392</scope>
    <scope>IDENTIFICATION BY MASS SPECTROMETRY [LARGE SCALE ANALYSIS]</scope>
</reference>
<reference key="19">
    <citation type="journal article" date="2012" name="Proc. Natl. Acad. Sci. U.S.A.">
        <title>N-terminal acetylome analyses and functional insights of the N-terminal acetyltransferase NatB.</title>
        <authorList>
            <person name="Van Damme P."/>
            <person name="Lasa M."/>
            <person name="Polevoda B."/>
            <person name="Gazquez C."/>
            <person name="Elosegui-Artola A."/>
            <person name="Kim D.S."/>
            <person name="De Juan-Pardo E."/>
            <person name="Demeyer K."/>
            <person name="Hole K."/>
            <person name="Larrea E."/>
            <person name="Timmerman E."/>
            <person name="Prieto J."/>
            <person name="Arnesen T."/>
            <person name="Sherman F."/>
            <person name="Gevaert K."/>
            <person name="Aldabe R."/>
        </authorList>
    </citation>
    <scope>ACETYLATION [LARGE SCALE ANALYSIS] AT SER-2</scope>
    <scope>CLEAVAGE OF INITIATOR METHIONINE [LARGE SCALE ANALYSIS]</scope>
    <scope>IDENTIFICATION BY MASS SPECTROMETRY [LARGE SCALE ANALYSIS]</scope>
</reference>
<reference key="20">
    <citation type="journal article" date="2012" name="Proteomics">
        <title>Sites of ubiquitin attachment in Saccharomyces cerevisiae.</title>
        <authorList>
            <person name="Starita L.M."/>
            <person name="Lo R.S."/>
            <person name="Eng J.K."/>
            <person name="von Haller P.D."/>
            <person name="Fields S."/>
        </authorList>
    </citation>
    <scope>UBIQUITINATION [LARGE SCALE ANALYSIS] AT LYS-82; LYS-197; LYS-258; LYS-274 AND LYS-302</scope>
    <scope>IDENTIFICATION BY MASS SPECTROMETRY [LARGE SCALE ANALYSIS]</scope>
</reference>
<reference evidence="14" key="21">
    <citation type="journal article" date="1982" name="EMBO J.">
        <title>Sequence and structure of yeast phosphoglycerate kinase.</title>
        <authorList>
            <person name="Watson H.C."/>
            <person name="Walker N.P.C."/>
            <person name="Shaw P.J."/>
            <person name="Bryant T.N."/>
            <person name="Wendell P.L."/>
            <person name="Fothergill L.A."/>
            <person name="Perkins R.E."/>
            <person name="Conroy S.C."/>
            <person name="Dobson M.J."/>
            <person name="Tuite M.F."/>
            <person name="Kingsman A.J."/>
            <person name="Kingsman S.M."/>
        </authorList>
    </citation>
    <scope>X-RAY CRYSTALLOGRAPHY (2.5 ANGSTROMS) IN COMPLEX WITH SUBSTRATE AND ATP ANALOG</scope>
</reference>
<reference evidence="13" key="22">
    <citation type="journal article" date="1996" name="Biochemistry">
        <title>Structure of the R65Q mutant of yeast 3-phosphoglycerate kinase complexed with Mg-AMP-PNP and 3-phospho-D-glycerate.</title>
        <authorList>
            <person name="McPhillips T.M."/>
            <person name="Hsu B.T."/>
            <person name="Sherman M.A."/>
            <person name="Mas M.T."/>
            <person name="Rees D.C."/>
        </authorList>
    </citation>
    <scope>X-RAY CRYSTALLOGRAPHY (2.4 ANGSTROMS) OF MUTANT GLN-66 IN COMPLEX WITH SUBSTRATE AND ATP ANALOG</scope>
</reference>
<accession>P00560</accession>
<accession>D6VR21</accession>
<proteinExistence type="evidence at protein level"/>
<feature type="initiator methionine" description="Removed" evidence="15 21">
    <location>
        <position position="1"/>
    </location>
</feature>
<feature type="chain" id="PRO_0000145893" description="Phosphoglycerate kinase">
    <location>
        <begin position="2"/>
        <end position="416"/>
    </location>
</feature>
<feature type="binding site" evidence="2">
    <location>
        <position position="23"/>
    </location>
    <ligand>
        <name>(2R)-3-phosphoglycerate</name>
        <dbReference type="ChEBI" id="CHEBI:58272"/>
    </ligand>
</feature>
<feature type="binding site" evidence="3">
    <location>
        <position position="24"/>
    </location>
    <ligand>
        <name>(2R)-3-phosphoglycerate</name>
        <dbReference type="ChEBI" id="CHEBI:58272"/>
    </ligand>
</feature>
<feature type="binding site" evidence="2">
    <location>
        <position position="25"/>
    </location>
    <ligand>
        <name>(2R)-3-phosphoglycerate</name>
        <dbReference type="ChEBI" id="CHEBI:58272"/>
    </ligand>
</feature>
<feature type="binding site" evidence="10 13">
    <location>
        <position position="26"/>
    </location>
    <ligand>
        <name>(2R)-3-phosphoglycerate</name>
        <dbReference type="ChEBI" id="CHEBI:58272"/>
    </ligand>
</feature>
<feature type="binding site" evidence="2">
    <location>
        <position position="38"/>
    </location>
    <ligand>
        <name>(2R)-3-phosphoglycerate</name>
        <dbReference type="ChEBI" id="CHEBI:58272"/>
    </ligand>
</feature>
<feature type="binding site" evidence="10 13">
    <location>
        <position position="39"/>
    </location>
    <ligand>
        <name>(2R)-3-phosphoglycerate</name>
        <dbReference type="ChEBI" id="CHEBI:58272"/>
    </ligand>
</feature>
<feature type="binding site" evidence="2">
    <location>
        <position position="62"/>
    </location>
    <ligand>
        <name>(2R)-3-phosphoglycerate</name>
        <dbReference type="ChEBI" id="CHEBI:58272"/>
    </ligand>
</feature>
<feature type="binding site" evidence="3">
    <location>
        <position position="63"/>
    </location>
    <ligand>
        <name>(2R)-3-phosphoglycerate</name>
        <dbReference type="ChEBI" id="CHEBI:58272"/>
    </ligand>
</feature>
<feature type="binding site" evidence="2">
    <location>
        <position position="65"/>
    </location>
    <ligand>
        <name>(2R)-3-phosphoglycerate</name>
        <dbReference type="ChEBI" id="CHEBI:58272"/>
    </ligand>
</feature>
<feature type="binding site" evidence="3">
    <location>
        <position position="66"/>
    </location>
    <ligand>
        <name>(2R)-3-phosphoglycerate</name>
        <dbReference type="ChEBI" id="CHEBI:58272"/>
    </ligand>
</feature>
<feature type="binding site" evidence="2">
    <location>
        <position position="121"/>
    </location>
    <ligand>
        <name>(2R)-3-phosphoglycerate</name>
        <dbReference type="ChEBI" id="CHEBI:58272"/>
    </ligand>
</feature>
<feature type="binding site" evidence="10 13">
    <location>
        <position position="122"/>
    </location>
    <ligand>
        <name>(2R)-3-phosphoglycerate</name>
        <dbReference type="ChEBI" id="CHEBI:58272"/>
    </ligand>
</feature>
<feature type="binding site" evidence="2">
    <location>
        <position position="168"/>
    </location>
    <ligand>
        <name>(2R)-3-phosphoglycerate</name>
        <dbReference type="ChEBI" id="CHEBI:58272"/>
    </ligand>
</feature>
<feature type="binding site" evidence="3">
    <location>
        <position position="169"/>
    </location>
    <ligand>
        <name>(2R)-3-phosphoglycerate</name>
        <dbReference type="ChEBI" id="CHEBI:58272"/>
    </ligand>
</feature>
<feature type="binding site" evidence="2">
    <location>
        <position position="212"/>
    </location>
    <ligand>
        <name>ADP</name>
        <dbReference type="ChEBI" id="CHEBI:456216"/>
    </ligand>
</feature>
<feature type="binding site" evidence="2">
    <location>
        <position position="212"/>
    </location>
    <ligand>
        <name>CDP</name>
        <dbReference type="ChEBI" id="CHEBI:58069"/>
    </ligand>
</feature>
<feature type="binding site" evidence="3">
    <location>
        <position position="213"/>
    </location>
    <ligand>
        <name>AMP</name>
        <dbReference type="ChEBI" id="CHEBI:456215"/>
    </ligand>
</feature>
<feature type="binding site" evidence="9 14">
    <location>
        <position position="213"/>
    </location>
    <ligand>
        <name>ATP</name>
        <dbReference type="ChEBI" id="CHEBI:30616"/>
    </ligand>
</feature>
<feature type="binding site" evidence="2">
    <location>
        <position position="213"/>
    </location>
    <ligand>
        <name>Mg(2+)</name>
        <dbReference type="ChEBI" id="CHEBI:18420"/>
    </ligand>
</feature>
<feature type="binding site" evidence="3">
    <location>
        <position position="214"/>
    </location>
    <ligand>
        <name>AMP</name>
        <dbReference type="ChEBI" id="CHEBI:456215"/>
    </ligand>
</feature>
<feature type="binding site" evidence="9 14">
    <location>
        <position position="214"/>
    </location>
    <ligand>
        <name>ATP</name>
        <dbReference type="ChEBI" id="CHEBI:30616"/>
    </ligand>
</feature>
<feature type="binding site" evidence="2">
    <location>
        <position position="216"/>
    </location>
    <ligand>
        <name>Mg(2+)</name>
        <dbReference type="ChEBI" id="CHEBI:18420"/>
    </ligand>
</feature>
<feature type="binding site" evidence="2">
    <location>
        <position position="217"/>
    </location>
    <ligand>
        <name>CDP</name>
        <dbReference type="ChEBI" id="CHEBI:58069"/>
    </ligand>
</feature>
<feature type="binding site" evidence="2">
    <location>
        <position position="217"/>
    </location>
    <ligand>
        <name>Mg(2+)</name>
        <dbReference type="ChEBI" id="CHEBI:18420"/>
    </ligand>
</feature>
<feature type="binding site" evidence="3">
    <location>
        <position position="218"/>
    </location>
    <ligand>
        <name>AMP</name>
        <dbReference type="ChEBI" id="CHEBI:456215"/>
    </ligand>
</feature>
<feature type="binding site" evidence="3">
    <location>
        <position position="218"/>
    </location>
    <ligand>
        <name>ATP</name>
        <dbReference type="ChEBI" id="CHEBI:30616"/>
    </ligand>
</feature>
<feature type="binding site" evidence="2">
    <location>
        <position position="236"/>
    </location>
    <ligand>
        <name>ADP</name>
        <dbReference type="ChEBI" id="CHEBI:456216"/>
    </ligand>
</feature>
<feature type="binding site" evidence="2">
    <location>
        <position position="236"/>
    </location>
    <ligand>
        <name>CDP</name>
        <dbReference type="ChEBI" id="CHEBI:58069"/>
    </ligand>
</feature>
<feature type="binding site" evidence="3">
    <location>
        <position position="237"/>
    </location>
    <ligand>
        <name>AMP</name>
        <dbReference type="ChEBI" id="CHEBI:456215"/>
    </ligand>
</feature>
<feature type="binding site" evidence="3">
    <location>
        <position position="237"/>
    </location>
    <ligand>
        <name>ATP</name>
        <dbReference type="ChEBI" id="CHEBI:30616"/>
    </ligand>
</feature>
<feature type="binding site" evidence="3">
    <location>
        <position position="311"/>
    </location>
    <ligand>
        <name>AMP</name>
        <dbReference type="ChEBI" id="CHEBI:456215"/>
    </ligand>
</feature>
<feature type="binding site" evidence="3">
    <location>
        <position position="311"/>
    </location>
    <ligand>
        <name>ATP</name>
        <dbReference type="ChEBI" id="CHEBI:30616"/>
    </ligand>
</feature>
<feature type="binding site" evidence="9 14">
    <location>
        <position position="312"/>
    </location>
    <ligand>
        <name>ATP</name>
        <dbReference type="ChEBI" id="CHEBI:30616"/>
    </ligand>
</feature>
<feature type="binding site" description="covalent" evidence="9 14">
    <location>
        <position position="335"/>
    </location>
    <ligand>
        <name>ATP</name>
        <dbReference type="ChEBI" id="CHEBI:30616"/>
    </ligand>
</feature>
<feature type="binding site" evidence="2">
    <location>
        <position position="336"/>
    </location>
    <ligand>
        <name>CDP</name>
        <dbReference type="ChEBI" id="CHEBI:58069"/>
    </ligand>
</feature>
<feature type="binding site" evidence="2">
    <location>
        <position position="341"/>
    </location>
    <ligand>
        <name>ADP</name>
        <dbReference type="ChEBI" id="CHEBI:456216"/>
    </ligand>
</feature>
<feature type="binding site" evidence="2">
    <location>
        <position position="341"/>
    </location>
    <ligand>
        <name>CDP</name>
        <dbReference type="ChEBI" id="CHEBI:58069"/>
    </ligand>
</feature>
<feature type="binding site" evidence="3">
    <location>
        <position position="342"/>
    </location>
    <ligand>
        <name>AMP</name>
        <dbReference type="ChEBI" id="CHEBI:456215"/>
    </ligand>
</feature>
<feature type="binding site" evidence="9 14">
    <location>
        <position position="342"/>
    </location>
    <ligand>
        <name>ATP</name>
        <dbReference type="ChEBI" id="CHEBI:30616"/>
    </ligand>
</feature>
<feature type="binding site" evidence="9 14">
    <location>
        <position position="371"/>
    </location>
    <ligand>
        <name>(2R)-3-phosphoglycerate</name>
        <dbReference type="ChEBI" id="CHEBI:58272"/>
    </ligand>
</feature>
<feature type="binding site" description="covalent" evidence="9 14">
    <location>
        <position position="373"/>
    </location>
    <ligand>
        <name>ATP</name>
        <dbReference type="ChEBI" id="CHEBI:30616"/>
    </ligand>
</feature>
<feature type="binding site" evidence="9 14">
    <location>
        <position position="373"/>
    </location>
    <ligand>
        <name>Mg(2+)</name>
        <dbReference type="ChEBI" id="CHEBI:18420"/>
    </ligand>
</feature>
<feature type="binding site" evidence="3">
    <location>
        <position position="374"/>
    </location>
    <ligand>
        <name>ATP</name>
        <dbReference type="ChEBI" id="CHEBI:30616"/>
    </ligand>
</feature>
<feature type="binding site" evidence="9 14">
    <location>
        <position position="394"/>
    </location>
    <ligand>
        <name>(2R)-3-phosphoglycerate</name>
        <dbReference type="ChEBI" id="CHEBI:58272"/>
    </ligand>
</feature>
<feature type="binding site" evidence="9 14">
    <location>
        <position position="395"/>
    </location>
    <ligand>
        <name>(2R)-3-phosphoglycerate</name>
        <dbReference type="ChEBI" id="CHEBI:58272"/>
    </ligand>
</feature>
<feature type="modified residue" description="N-acetylserine" evidence="15 21">
    <location>
        <position position="2"/>
    </location>
</feature>
<feature type="modified residue" description="Phosphothreonine" evidence="18">
    <location>
        <position position="93"/>
    </location>
</feature>
<feature type="modified residue" description="Phosphoserine" evidence="19">
    <location>
        <position position="110"/>
    </location>
</feature>
<feature type="modified residue" description="Phosphoserine" evidence="16">
    <location>
        <position position="130"/>
    </location>
</feature>
<feature type="modified residue" description="Phosphoserine" evidence="17">
    <location>
        <position position="154"/>
    </location>
</feature>
<feature type="modified residue" description="Phosphoserine" evidence="19">
    <location>
        <position position="172"/>
    </location>
</feature>
<feature type="modified residue" description="Phosphothreonine" evidence="18">
    <location>
        <position position="203"/>
    </location>
</feature>
<feature type="modified residue" description="Phosphothreonine" evidence="18">
    <location>
        <position position="241"/>
    </location>
</feature>
<feature type="modified residue" description="Phosphothreonine" evidence="19">
    <location>
        <position position="298"/>
    </location>
</feature>
<feature type="modified residue" description="Phosphoserine" evidence="19">
    <location>
        <position position="318"/>
    </location>
</feature>
<feature type="modified residue" description="Phosphothreonine" evidence="17 18 19">
    <location>
        <position position="331"/>
    </location>
</feature>
<feature type="modified residue" description="Phosphothreonine" evidence="17 19">
    <location>
        <position position="392"/>
    </location>
</feature>
<feature type="cross-link" description="Glycyl lysine isopeptide (Lys-Gly) (interchain with G-Cter in ubiquitin)" evidence="20">
    <location>
        <position position="82"/>
    </location>
</feature>
<feature type="cross-link" description="Glycyl lysine isopeptide (Lys-Gly) (interchain with G-Cter in ubiquitin)" evidence="20">
    <location>
        <position position="197"/>
    </location>
</feature>
<feature type="cross-link" description="Glycyl lysine isopeptide (Lys-Gly) (interchain with G-Cter in ubiquitin)" evidence="20">
    <location>
        <position position="258"/>
    </location>
</feature>
<feature type="cross-link" description="Glycyl lysine isopeptide (Lys-Gly) (interchain with G-Cter in ubiquitin)" evidence="20">
    <location>
        <position position="274"/>
    </location>
</feature>
<feature type="cross-link" description="Glycyl lysine isopeptide (Lys-Gly) (interchain with G-Cter in ubiquitin)" evidence="20">
    <location>
        <position position="302"/>
    </location>
</feature>
<feature type="mutagenesis site" description="2-fold reduction of Vmax." evidence="6">
    <original>R</original>
    <variation>K</variation>
    <location>
        <position position="22"/>
    </location>
</feature>
<feature type="mutagenesis site" description="7-fold reduction of Vmax." evidence="6">
    <original>R</original>
    <variation>M</variation>
    <location>
        <position position="22"/>
    </location>
</feature>
<feature type="sequence conflict" description="In Ref. 6; AAA34863." evidence="11" ref="6">
    <original>N</original>
    <variation>H</variation>
    <location>
        <position position="72"/>
    </location>
</feature>
<feature type="sequence conflict" description="In Ref. 6; AAA34863." evidence="11" ref="6">
    <original>R</original>
    <variation>C</variation>
    <location>
        <position position="122"/>
    </location>
</feature>
<feature type="sequence conflict" description="In Ref. 6; AAA34863." evidence="11" ref="6">
    <original>K</original>
    <variation>Q</variation>
    <location>
        <position position="147"/>
    </location>
</feature>
<feature type="sequence conflict" description="In Ref. 7; AA sequence." evidence="11" ref="7">
    <original>G</original>
    <variation>S</variation>
    <location>
        <position position="185"/>
    </location>
</feature>
<feature type="sequence conflict" description="In Ref. 7; AA sequence." evidence="11" ref="7">
    <original>E</original>
    <variation>I</variation>
    <location>
        <position position="191"/>
    </location>
</feature>
<feature type="helix" evidence="23">
    <location>
        <begin position="9"/>
        <end position="11"/>
    </location>
</feature>
<feature type="strand" evidence="23">
    <location>
        <begin position="18"/>
        <end position="22"/>
    </location>
</feature>
<feature type="strand" evidence="23">
    <location>
        <begin position="29"/>
        <end position="35"/>
    </location>
</feature>
<feature type="helix" evidence="23">
    <location>
        <begin position="38"/>
        <end position="51"/>
    </location>
</feature>
<feature type="strand" evidence="23">
    <location>
        <begin position="56"/>
        <end position="61"/>
    </location>
</feature>
<feature type="strand" evidence="24">
    <location>
        <begin position="69"/>
        <end position="72"/>
    </location>
</feature>
<feature type="helix" evidence="23">
    <location>
        <begin position="73"/>
        <end position="75"/>
    </location>
</feature>
<feature type="helix" evidence="22">
    <location>
        <begin position="78"/>
        <end position="88"/>
    </location>
</feature>
<feature type="strand" evidence="22">
    <location>
        <begin position="92"/>
        <end position="94"/>
    </location>
</feature>
<feature type="strand" evidence="22">
    <location>
        <begin position="98"/>
        <end position="100"/>
    </location>
</feature>
<feature type="helix" evidence="22">
    <location>
        <begin position="101"/>
        <end position="108"/>
    </location>
</feature>
<feature type="strand" evidence="24">
    <location>
        <begin position="110"/>
        <end position="112"/>
    </location>
</feature>
<feature type="strand" evidence="22">
    <location>
        <begin position="114"/>
        <end position="117"/>
    </location>
</feature>
<feature type="helix" evidence="22">
    <location>
        <begin position="121"/>
        <end position="123"/>
    </location>
</feature>
<feature type="turn" evidence="22">
    <location>
        <begin position="125"/>
        <end position="128"/>
    </location>
</feature>
<feature type="strand" evidence="22">
    <location>
        <begin position="129"/>
        <end position="133"/>
    </location>
</feature>
<feature type="strand" evidence="22">
    <location>
        <begin position="136"/>
        <end position="139"/>
    </location>
</feature>
<feature type="helix" evidence="22">
    <location>
        <begin position="142"/>
        <end position="153"/>
    </location>
</feature>
<feature type="strand" evidence="22">
    <location>
        <begin position="157"/>
        <end position="161"/>
    </location>
</feature>
<feature type="helix" evidence="22">
    <location>
        <begin position="164"/>
        <end position="166"/>
    </location>
</feature>
<feature type="helix" evidence="22">
    <location>
        <begin position="172"/>
        <end position="175"/>
    </location>
</feature>
<feature type="strand" evidence="22">
    <location>
        <begin position="182"/>
        <end position="184"/>
    </location>
</feature>
<feature type="helix" evidence="22">
    <location>
        <begin position="186"/>
        <end position="200"/>
    </location>
</feature>
<feature type="strand" evidence="22">
    <location>
        <begin position="204"/>
        <end position="211"/>
    </location>
</feature>
<feature type="turn" evidence="22">
    <location>
        <begin position="216"/>
        <end position="218"/>
    </location>
</feature>
<feature type="helix" evidence="22">
    <location>
        <begin position="219"/>
        <end position="226"/>
    </location>
</feature>
<feature type="strand" evidence="22">
    <location>
        <begin position="230"/>
        <end position="235"/>
    </location>
</feature>
<feature type="helix" evidence="22">
    <location>
        <begin position="236"/>
        <end position="238"/>
    </location>
</feature>
<feature type="helix" evidence="22">
    <location>
        <begin position="239"/>
        <end position="246"/>
    </location>
</feature>
<feature type="helix" evidence="24">
    <location>
        <begin position="247"/>
        <end position="252"/>
    </location>
</feature>
<feature type="helix" evidence="22">
    <location>
        <begin position="258"/>
        <end position="273"/>
    </location>
</feature>
<feature type="strand" evidence="22">
    <location>
        <begin position="277"/>
        <end position="279"/>
    </location>
</feature>
<feature type="strand" evidence="22">
    <location>
        <begin position="282"/>
        <end position="291"/>
    </location>
</feature>
<feature type="strand" evidence="22">
    <location>
        <begin position="296"/>
        <end position="300"/>
    </location>
</feature>
<feature type="turn" evidence="22">
    <location>
        <begin position="301"/>
        <end position="303"/>
    </location>
</feature>
<feature type="strand" evidence="24">
    <location>
        <begin position="304"/>
        <end position="306"/>
    </location>
</feature>
<feature type="strand" evidence="22">
    <location>
        <begin position="310"/>
        <end position="314"/>
    </location>
</feature>
<feature type="helix" evidence="22">
    <location>
        <begin position="316"/>
        <end position="328"/>
    </location>
</feature>
<feature type="strand" evidence="22">
    <location>
        <begin position="330"/>
        <end position="336"/>
    </location>
</feature>
<feature type="helix" evidence="22">
    <location>
        <begin position="344"/>
        <end position="346"/>
    </location>
</feature>
<feature type="helix" evidence="22">
    <location>
        <begin position="348"/>
        <end position="362"/>
    </location>
</feature>
<feature type="strand" evidence="22">
    <location>
        <begin position="366"/>
        <end position="369"/>
    </location>
</feature>
<feature type="helix" evidence="22">
    <location>
        <begin position="373"/>
        <end position="380"/>
    </location>
</feature>
<feature type="helix" evidence="22">
    <location>
        <begin position="384"/>
        <end position="386"/>
    </location>
</feature>
<feature type="strand" evidence="22">
    <location>
        <begin position="387"/>
        <end position="390"/>
    </location>
</feature>
<feature type="helix" evidence="22">
    <location>
        <begin position="395"/>
        <end position="401"/>
    </location>
</feature>
<feature type="helix" evidence="22">
    <location>
        <begin position="407"/>
        <end position="410"/>
    </location>
</feature>
<keyword id="KW-0002">3D-structure</keyword>
<keyword id="KW-0007">Acetylation</keyword>
<keyword id="KW-0067">ATP-binding</keyword>
<keyword id="KW-0963">Cytoplasm</keyword>
<keyword id="KW-0903">Direct protein sequencing</keyword>
<keyword id="KW-0324">Glycolysis</keyword>
<keyword id="KW-1017">Isopeptide bond</keyword>
<keyword id="KW-0418">Kinase</keyword>
<keyword id="KW-0460">Magnesium</keyword>
<keyword id="KW-0479">Metal-binding</keyword>
<keyword id="KW-0496">Mitochondrion</keyword>
<keyword id="KW-0547">Nucleotide-binding</keyword>
<keyword id="KW-0597">Phosphoprotein</keyword>
<keyword id="KW-1185">Reference proteome</keyword>
<keyword id="KW-0808">Transferase</keyword>
<keyword id="KW-0832">Ubl conjugation</keyword>
<sequence>MSLSSKLSVQDLDLKDKRVFIRVDFNVPLDGKKITSNQRIVAALPTIKYVLEHHPRYVVLASHLGRPNGERNEKYSLAPVAKELQSLLGKDVTFLNDCVGPEVEAAVKASAPGSVILLENLRYHIEEEGSRKVDGQKVKASKEDVQKFRHELSSLADVYINDAFGTAHRAHSSMVGFDLPQRAAGFLLEKELKYFGKALENPTRPFLAILGGAKVADKIQLIDNLLDKVDSIIIGGGMAFTFKKVLENTEIGDSIFDKAGAEIVPKLMEKAKAKGVEVVLPVDFIIADAFSADANTKTVTDKEGIPAGWQGLDNGPESRKLFAATVAKAKTIVWNGPPGVFEFEKFAAGTKALLDEVVKSSAAGNTVIIGGGDTATVAKKYGVTDKISHVSTGGGASLELLEGKELPGVAFLSEKK</sequence>
<gene>
    <name type="primary">PGK1</name>
    <name type="ordered locus">YCR012W</name>
    <name type="ORF">YCR12W</name>
</gene>
<dbReference type="EC" id="2.7.2.3" evidence="12"/>
<dbReference type="EMBL" id="J01342">
    <property type="protein sequence ID" value="AAA88729.1"/>
    <property type="molecule type" value="Genomic_DNA"/>
</dbReference>
<dbReference type="EMBL" id="X59720">
    <property type="protein sequence ID" value="CAA42329.2"/>
    <property type="molecule type" value="Genomic_DNA"/>
</dbReference>
<dbReference type="EMBL" id="AH001380">
    <property type="protein sequence ID" value="AAA34864.1"/>
    <property type="molecule type" value="Genomic_DNA"/>
</dbReference>
<dbReference type="EMBL" id="AH001380">
    <property type="protein sequence ID" value="AAA34863.1"/>
    <property type="molecule type" value="Genomic_DNA"/>
</dbReference>
<dbReference type="EMBL" id="BK006937">
    <property type="protein sequence ID" value="DAA07490.1"/>
    <property type="molecule type" value="Genomic_DNA"/>
</dbReference>
<dbReference type="PIR" id="S19422">
    <property type="entry name" value="KIBYG"/>
</dbReference>
<dbReference type="RefSeq" id="NP_009938.2">
    <property type="nucleotide sequence ID" value="NM_001178725.1"/>
</dbReference>
<dbReference type="PDB" id="1FW8">
    <property type="method" value="X-ray"/>
    <property type="resolution" value="2.30 A"/>
    <property type="chains" value="A=74-416"/>
</dbReference>
<dbReference type="PDB" id="1QPG">
    <property type="method" value="X-ray"/>
    <property type="resolution" value="2.40 A"/>
    <property type="chains" value="A=2-416"/>
</dbReference>
<dbReference type="PDB" id="3PGK">
    <property type="method" value="X-ray"/>
    <property type="resolution" value="2.50 A"/>
    <property type="chains" value="A=2-416"/>
</dbReference>
<dbReference type="PDBsum" id="1FW8"/>
<dbReference type="PDBsum" id="1QPG"/>
<dbReference type="PDBsum" id="3PGK"/>
<dbReference type="BMRB" id="P00560"/>
<dbReference type="PCDDB" id="P00560"/>
<dbReference type="SMR" id="P00560"/>
<dbReference type="BioGRID" id="30991">
    <property type="interactions" value="222"/>
</dbReference>
<dbReference type="DIP" id="DIP-4152N"/>
<dbReference type="FunCoup" id="P00560">
    <property type="interactions" value="1024"/>
</dbReference>
<dbReference type="IntAct" id="P00560">
    <property type="interactions" value="106"/>
</dbReference>
<dbReference type="MINT" id="P00560"/>
<dbReference type="STRING" id="4932.YCR012W"/>
<dbReference type="BindingDB" id="P00560"/>
<dbReference type="ChEMBL" id="CHEMBL2674"/>
<dbReference type="CarbonylDB" id="P00560"/>
<dbReference type="iPTMnet" id="P00560"/>
<dbReference type="PaxDb" id="4932-YCR012W"/>
<dbReference type="PeptideAtlas" id="P00560"/>
<dbReference type="TopDownProteomics" id="P00560"/>
<dbReference type="EnsemblFungi" id="YCR012W_mRNA">
    <property type="protein sequence ID" value="YCR012W"/>
    <property type="gene ID" value="YCR012W"/>
</dbReference>
<dbReference type="GeneID" id="850370"/>
<dbReference type="KEGG" id="sce:YCR012W"/>
<dbReference type="AGR" id="SGD:S000000605"/>
<dbReference type="SGD" id="S000000605">
    <property type="gene designation" value="PGK1"/>
</dbReference>
<dbReference type="VEuPathDB" id="FungiDB:YCR012W"/>
<dbReference type="eggNOG" id="KOG1367">
    <property type="taxonomic scope" value="Eukaryota"/>
</dbReference>
<dbReference type="GeneTree" id="ENSGT00390000008820"/>
<dbReference type="HOGENOM" id="CLU_025427_0_2_1"/>
<dbReference type="InParanoid" id="P00560"/>
<dbReference type="OMA" id="DMIFDIG"/>
<dbReference type="OrthoDB" id="275353at2759"/>
<dbReference type="BioCyc" id="YEAST:YCR012W-MONOMER"/>
<dbReference type="BRENDA" id="2.7.2.3">
    <property type="organism ID" value="984"/>
</dbReference>
<dbReference type="Reactome" id="R-SCE-70171">
    <property type="pathway name" value="Glycolysis"/>
</dbReference>
<dbReference type="Reactome" id="R-SCE-70263">
    <property type="pathway name" value="Gluconeogenesis"/>
</dbReference>
<dbReference type="SABIO-RK" id="P00560"/>
<dbReference type="UniPathway" id="UPA00109">
    <property type="reaction ID" value="UER00185"/>
</dbReference>
<dbReference type="BioGRID-ORCS" id="850370">
    <property type="hits" value="2 hits in 10 CRISPR screens"/>
</dbReference>
<dbReference type="EvolutionaryTrace" id="P00560"/>
<dbReference type="PRO" id="PR:P00560"/>
<dbReference type="Proteomes" id="UP000002311">
    <property type="component" value="Chromosome III"/>
</dbReference>
<dbReference type="RNAct" id="P00560">
    <property type="molecule type" value="protein"/>
</dbReference>
<dbReference type="GO" id="GO:0005737">
    <property type="term" value="C:cytoplasm"/>
    <property type="evidence" value="ECO:0000314"/>
    <property type="project" value="SGD"/>
</dbReference>
<dbReference type="GO" id="GO:0005829">
    <property type="term" value="C:cytosol"/>
    <property type="evidence" value="ECO:0000318"/>
    <property type="project" value="GO_Central"/>
</dbReference>
<dbReference type="GO" id="GO:0005739">
    <property type="term" value="C:mitochondrion"/>
    <property type="evidence" value="ECO:0000314"/>
    <property type="project" value="SGD"/>
</dbReference>
<dbReference type="GO" id="GO:0005886">
    <property type="term" value="C:plasma membrane"/>
    <property type="evidence" value="ECO:0007005"/>
    <property type="project" value="SGD"/>
</dbReference>
<dbReference type="GO" id="GO:0043531">
    <property type="term" value="F:ADP binding"/>
    <property type="evidence" value="ECO:0000318"/>
    <property type="project" value="GO_Central"/>
</dbReference>
<dbReference type="GO" id="GO:0005524">
    <property type="term" value="F:ATP binding"/>
    <property type="evidence" value="ECO:0000318"/>
    <property type="project" value="GO_Central"/>
</dbReference>
<dbReference type="GO" id="GO:0046872">
    <property type="term" value="F:metal ion binding"/>
    <property type="evidence" value="ECO:0007669"/>
    <property type="project" value="UniProtKB-KW"/>
</dbReference>
<dbReference type="GO" id="GO:0004618">
    <property type="term" value="F:phosphoglycerate kinase activity"/>
    <property type="evidence" value="ECO:0000314"/>
    <property type="project" value="SGD"/>
</dbReference>
<dbReference type="GO" id="GO:0006094">
    <property type="term" value="P:gluconeogenesis"/>
    <property type="evidence" value="ECO:0000315"/>
    <property type="project" value="SGD"/>
</dbReference>
<dbReference type="GO" id="GO:0006096">
    <property type="term" value="P:glycolytic process"/>
    <property type="evidence" value="ECO:0000315"/>
    <property type="project" value="SGD"/>
</dbReference>
<dbReference type="CDD" id="cd00318">
    <property type="entry name" value="Phosphoglycerate_kinase"/>
    <property type="match status" value="1"/>
</dbReference>
<dbReference type="FunFam" id="3.40.50.1260:FF:000003">
    <property type="entry name" value="Phosphoglycerate kinase"/>
    <property type="match status" value="1"/>
</dbReference>
<dbReference type="FunFam" id="3.40.50.1260:FF:000019">
    <property type="entry name" value="Phosphoglycerate kinase 1"/>
    <property type="match status" value="1"/>
</dbReference>
<dbReference type="Gene3D" id="3.40.50.1260">
    <property type="entry name" value="Phosphoglycerate kinase, N-terminal domain"/>
    <property type="match status" value="3"/>
</dbReference>
<dbReference type="HAMAP" id="MF_00145">
    <property type="entry name" value="Phosphoglyc_kinase"/>
    <property type="match status" value="1"/>
</dbReference>
<dbReference type="InterPro" id="IPR001576">
    <property type="entry name" value="Phosphoglycerate_kinase"/>
</dbReference>
<dbReference type="InterPro" id="IPR015911">
    <property type="entry name" value="Phosphoglycerate_kinase_CS"/>
</dbReference>
<dbReference type="InterPro" id="IPR015824">
    <property type="entry name" value="Phosphoglycerate_kinase_N"/>
</dbReference>
<dbReference type="InterPro" id="IPR036043">
    <property type="entry name" value="Phosphoglycerate_kinase_sf"/>
</dbReference>
<dbReference type="PANTHER" id="PTHR11406">
    <property type="entry name" value="PHOSPHOGLYCERATE KINASE"/>
    <property type="match status" value="1"/>
</dbReference>
<dbReference type="PANTHER" id="PTHR11406:SF0">
    <property type="entry name" value="PHOSPHOGLYCERATE KINASE"/>
    <property type="match status" value="1"/>
</dbReference>
<dbReference type="Pfam" id="PF00162">
    <property type="entry name" value="PGK"/>
    <property type="match status" value="1"/>
</dbReference>
<dbReference type="PIRSF" id="PIRSF000724">
    <property type="entry name" value="Pgk"/>
    <property type="match status" value="1"/>
</dbReference>
<dbReference type="PRINTS" id="PR00477">
    <property type="entry name" value="PHGLYCKINASE"/>
</dbReference>
<dbReference type="SUPFAM" id="SSF53748">
    <property type="entry name" value="Phosphoglycerate kinase"/>
    <property type="match status" value="1"/>
</dbReference>
<dbReference type="PROSITE" id="PS00111">
    <property type="entry name" value="PGLYCERATE_KINASE"/>
    <property type="match status" value="1"/>
</dbReference>
<name>PGK_YEAST</name>